<protein>
    <recommendedName>
        <fullName evidence="1">Nucleotide-binding protein Glov_2163</fullName>
    </recommendedName>
</protein>
<evidence type="ECO:0000255" key="1">
    <source>
        <dbReference type="HAMAP-Rule" id="MF_00636"/>
    </source>
</evidence>
<organism>
    <name type="scientific">Trichlorobacter lovleyi (strain ATCC BAA-1151 / DSM 17278 / SZ)</name>
    <name type="common">Geobacter lovleyi</name>
    <dbReference type="NCBI Taxonomy" id="398767"/>
    <lineage>
        <taxon>Bacteria</taxon>
        <taxon>Pseudomonadati</taxon>
        <taxon>Thermodesulfobacteriota</taxon>
        <taxon>Desulfuromonadia</taxon>
        <taxon>Geobacterales</taxon>
        <taxon>Geobacteraceae</taxon>
        <taxon>Trichlorobacter</taxon>
    </lineage>
</organism>
<feature type="chain" id="PRO_1000130762" description="Nucleotide-binding protein Glov_2163">
    <location>
        <begin position="1"/>
        <end position="285"/>
    </location>
</feature>
<feature type="binding site" evidence="1">
    <location>
        <begin position="8"/>
        <end position="15"/>
    </location>
    <ligand>
        <name>ATP</name>
        <dbReference type="ChEBI" id="CHEBI:30616"/>
    </ligand>
</feature>
<feature type="binding site" evidence="1">
    <location>
        <begin position="59"/>
        <end position="62"/>
    </location>
    <ligand>
        <name>GTP</name>
        <dbReference type="ChEBI" id="CHEBI:37565"/>
    </ligand>
</feature>
<dbReference type="EMBL" id="CP001089">
    <property type="protein sequence ID" value="ACD95879.1"/>
    <property type="molecule type" value="Genomic_DNA"/>
</dbReference>
<dbReference type="RefSeq" id="WP_012470217.1">
    <property type="nucleotide sequence ID" value="NC_010814.1"/>
</dbReference>
<dbReference type="SMR" id="B3E458"/>
<dbReference type="STRING" id="398767.Glov_2163"/>
<dbReference type="KEGG" id="glo:Glov_2163"/>
<dbReference type="eggNOG" id="COG1660">
    <property type="taxonomic scope" value="Bacteria"/>
</dbReference>
<dbReference type="HOGENOM" id="CLU_059558_0_0_7"/>
<dbReference type="OrthoDB" id="9784461at2"/>
<dbReference type="Proteomes" id="UP000002420">
    <property type="component" value="Chromosome"/>
</dbReference>
<dbReference type="GO" id="GO:0005524">
    <property type="term" value="F:ATP binding"/>
    <property type="evidence" value="ECO:0007669"/>
    <property type="project" value="UniProtKB-UniRule"/>
</dbReference>
<dbReference type="GO" id="GO:0005525">
    <property type="term" value="F:GTP binding"/>
    <property type="evidence" value="ECO:0007669"/>
    <property type="project" value="UniProtKB-UniRule"/>
</dbReference>
<dbReference type="Gene3D" id="3.40.50.300">
    <property type="entry name" value="P-loop containing nucleotide triphosphate hydrolases"/>
    <property type="match status" value="2"/>
</dbReference>
<dbReference type="HAMAP" id="MF_00636">
    <property type="entry name" value="RapZ_like"/>
    <property type="match status" value="1"/>
</dbReference>
<dbReference type="InterPro" id="IPR027417">
    <property type="entry name" value="P-loop_NTPase"/>
</dbReference>
<dbReference type="InterPro" id="IPR005337">
    <property type="entry name" value="RapZ-like"/>
</dbReference>
<dbReference type="InterPro" id="IPR053930">
    <property type="entry name" value="RapZ-like_N"/>
</dbReference>
<dbReference type="InterPro" id="IPR053931">
    <property type="entry name" value="RapZ_C"/>
</dbReference>
<dbReference type="NCBIfam" id="NF003828">
    <property type="entry name" value="PRK05416.1"/>
    <property type="match status" value="1"/>
</dbReference>
<dbReference type="PANTHER" id="PTHR30448">
    <property type="entry name" value="RNASE ADAPTER PROTEIN RAPZ"/>
    <property type="match status" value="1"/>
</dbReference>
<dbReference type="PANTHER" id="PTHR30448:SF0">
    <property type="entry name" value="RNASE ADAPTER PROTEIN RAPZ"/>
    <property type="match status" value="1"/>
</dbReference>
<dbReference type="Pfam" id="PF22740">
    <property type="entry name" value="PapZ_C"/>
    <property type="match status" value="1"/>
</dbReference>
<dbReference type="Pfam" id="PF03668">
    <property type="entry name" value="RapZ-like_N"/>
    <property type="match status" value="1"/>
</dbReference>
<dbReference type="PIRSF" id="PIRSF005052">
    <property type="entry name" value="P-loopkin"/>
    <property type="match status" value="1"/>
</dbReference>
<dbReference type="SUPFAM" id="SSF52540">
    <property type="entry name" value="P-loop containing nucleoside triphosphate hydrolases"/>
    <property type="match status" value="1"/>
</dbReference>
<name>Y2163_TRIL1</name>
<keyword id="KW-0067">ATP-binding</keyword>
<keyword id="KW-0342">GTP-binding</keyword>
<keyword id="KW-0547">Nucleotide-binding</keyword>
<keyword id="KW-1185">Reference proteome</keyword>
<comment type="function">
    <text evidence="1">Displays ATPase and GTPase activities.</text>
</comment>
<comment type="similarity">
    <text evidence="1">Belongs to the RapZ-like family.</text>
</comment>
<accession>B3E458</accession>
<sequence>MRIVVITGMSGSGKSTAVRALEDEGFYCIDNLPVRLFRQFVELIEKSGESFKGVVLVTDIRGRDLSTGIVESFRELRSVGHELEVLFFDASDEVLIRRFAETRRRHPADEHCTVPEGIRIERERLAALRQNATLIIDTSEFNVHQLKEQVIRAIKGEQGSSNFTVEVVSFGFRYGVPLDASLVMDVRFLPNPHFVPALRPYSGQEPAVRQFVLEQPDTTAFLDHFFNLLQFLIPAYCREGKSYLTIAIGCTGGRHRSVAITEATAARLETLGLKVRISHRDIEKG</sequence>
<proteinExistence type="inferred from homology"/>
<gene>
    <name type="ordered locus">Glov_2163</name>
</gene>
<reference key="1">
    <citation type="submission" date="2008-05" db="EMBL/GenBank/DDBJ databases">
        <title>Complete sequence of chromosome of Geobacter lovleyi SZ.</title>
        <authorList>
            <consortium name="US DOE Joint Genome Institute"/>
            <person name="Lucas S."/>
            <person name="Copeland A."/>
            <person name="Lapidus A."/>
            <person name="Glavina del Rio T."/>
            <person name="Dalin E."/>
            <person name="Tice H."/>
            <person name="Bruce D."/>
            <person name="Goodwin L."/>
            <person name="Pitluck S."/>
            <person name="Chertkov O."/>
            <person name="Meincke L."/>
            <person name="Brettin T."/>
            <person name="Detter J.C."/>
            <person name="Han C."/>
            <person name="Tapia R."/>
            <person name="Kuske C.R."/>
            <person name="Schmutz J."/>
            <person name="Larimer F."/>
            <person name="Land M."/>
            <person name="Hauser L."/>
            <person name="Kyrpides N."/>
            <person name="Mikhailova N."/>
            <person name="Sung Y."/>
            <person name="Fletcher K.E."/>
            <person name="Ritalahti K.M."/>
            <person name="Loeffler F.E."/>
            <person name="Richardson P."/>
        </authorList>
    </citation>
    <scope>NUCLEOTIDE SEQUENCE [LARGE SCALE GENOMIC DNA]</scope>
    <source>
        <strain>ATCC BAA-1151 / DSM 17278 / SZ</strain>
    </source>
</reference>